<name>HLDE_HAEI8</name>
<reference key="1">
    <citation type="journal article" date="2005" name="J. Bacteriol.">
        <title>Genomic sequence of an otitis media isolate of nontypeable Haemophilus influenzae: comparative study with H. influenzae serotype d, strain KW20.</title>
        <authorList>
            <person name="Harrison A."/>
            <person name="Dyer D.W."/>
            <person name="Gillaspy A."/>
            <person name="Ray W.C."/>
            <person name="Mungur R."/>
            <person name="Carson M.B."/>
            <person name="Zhong H."/>
            <person name="Gipson J."/>
            <person name="Gipson M."/>
            <person name="Johnson L.S."/>
            <person name="Lewis L."/>
            <person name="Bakaletz L.O."/>
            <person name="Munson R.S. Jr."/>
        </authorList>
    </citation>
    <scope>NUCLEOTIDE SEQUENCE [LARGE SCALE GENOMIC DNA]</scope>
    <source>
        <strain>86-028NP</strain>
    </source>
</reference>
<accession>Q4QKN8</accession>
<gene>
    <name evidence="1" type="primary">hldE</name>
    <name type="ordered locus">NTHI1607</name>
</gene>
<feature type="chain" id="PRO_0000255761" description="Bifunctional protein HldE">
    <location>
        <begin position="1"/>
        <end position="476"/>
    </location>
</feature>
<feature type="region of interest" description="Ribokinase">
    <location>
        <begin position="1"/>
        <end position="318"/>
    </location>
</feature>
<feature type="region of interest" description="Cytidylyltransferase">
    <location>
        <begin position="344"/>
        <end position="476"/>
    </location>
</feature>
<feature type="active site" evidence="1">
    <location>
        <position position="264"/>
    </location>
</feature>
<feature type="binding site" evidence="1">
    <location>
        <begin position="195"/>
        <end position="198"/>
    </location>
    <ligand>
        <name>ATP</name>
        <dbReference type="ChEBI" id="CHEBI:30616"/>
    </ligand>
</feature>
<dbReference type="EC" id="2.7.1.167" evidence="1"/>
<dbReference type="EC" id="2.7.7.70" evidence="1"/>
<dbReference type="EMBL" id="CP000057">
    <property type="protein sequence ID" value="AAX88409.1"/>
    <property type="molecule type" value="Genomic_DNA"/>
</dbReference>
<dbReference type="RefSeq" id="WP_005656815.1">
    <property type="nucleotide sequence ID" value="NC_007146.2"/>
</dbReference>
<dbReference type="SMR" id="Q4QKN8"/>
<dbReference type="GeneID" id="93220344"/>
<dbReference type="KEGG" id="hit:NTHI1607"/>
<dbReference type="HOGENOM" id="CLU_021150_2_1_6"/>
<dbReference type="UniPathway" id="UPA00356">
    <property type="reaction ID" value="UER00437"/>
</dbReference>
<dbReference type="UniPathway" id="UPA00356">
    <property type="reaction ID" value="UER00439"/>
</dbReference>
<dbReference type="Proteomes" id="UP000002525">
    <property type="component" value="Chromosome"/>
</dbReference>
<dbReference type="GO" id="GO:0005829">
    <property type="term" value="C:cytosol"/>
    <property type="evidence" value="ECO:0007669"/>
    <property type="project" value="TreeGrafter"/>
</dbReference>
<dbReference type="GO" id="GO:0005524">
    <property type="term" value="F:ATP binding"/>
    <property type="evidence" value="ECO:0007669"/>
    <property type="project" value="UniProtKB-UniRule"/>
</dbReference>
<dbReference type="GO" id="GO:0033785">
    <property type="term" value="F:heptose 7-phosphate kinase activity"/>
    <property type="evidence" value="ECO:0007669"/>
    <property type="project" value="UniProtKB-UniRule"/>
</dbReference>
<dbReference type="GO" id="GO:0033786">
    <property type="term" value="F:heptose-1-phosphate adenylyltransferase activity"/>
    <property type="evidence" value="ECO:0007669"/>
    <property type="project" value="UniProtKB-UniRule"/>
</dbReference>
<dbReference type="GO" id="GO:0016773">
    <property type="term" value="F:phosphotransferase activity, alcohol group as acceptor"/>
    <property type="evidence" value="ECO:0007669"/>
    <property type="project" value="InterPro"/>
</dbReference>
<dbReference type="GO" id="GO:0097171">
    <property type="term" value="P:ADP-L-glycero-beta-D-manno-heptose biosynthetic process"/>
    <property type="evidence" value="ECO:0007669"/>
    <property type="project" value="UniProtKB-UniPathway"/>
</dbReference>
<dbReference type="CDD" id="cd01172">
    <property type="entry name" value="RfaE_like"/>
    <property type="match status" value="1"/>
</dbReference>
<dbReference type="FunFam" id="3.40.1190.20:FF:000002">
    <property type="entry name" value="Bifunctional protein HldE"/>
    <property type="match status" value="1"/>
</dbReference>
<dbReference type="FunFam" id="3.40.50.620:FF:000028">
    <property type="entry name" value="Bifunctional protein HldE"/>
    <property type="match status" value="1"/>
</dbReference>
<dbReference type="Gene3D" id="3.40.1190.20">
    <property type="match status" value="1"/>
</dbReference>
<dbReference type="Gene3D" id="3.40.50.620">
    <property type="entry name" value="HUPs"/>
    <property type="match status" value="1"/>
</dbReference>
<dbReference type="HAMAP" id="MF_01603">
    <property type="entry name" value="HldE"/>
    <property type="match status" value="1"/>
</dbReference>
<dbReference type="InterPro" id="IPR023030">
    <property type="entry name" value="Bifunc_HldE"/>
</dbReference>
<dbReference type="InterPro" id="IPR004821">
    <property type="entry name" value="Cyt_trans-like"/>
</dbReference>
<dbReference type="InterPro" id="IPR011611">
    <property type="entry name" value="PfkB_dom"/>
</dbReference>
<dbReference type="InterPro" id="IPR011913">
    <property type="entry name" value="RfaE_dom_I"/>
</dbReference>
<dbReference type="InterPro" id="IPR011914">
    <property type="entry name" value="RfaE_dom_II"/>
</dbReference>
<dbReference type="InterPro" id="IPR029056">
    <property type="entry name" value="Ribokinase-like"/>
</dbReference>
<dbReference type="InterPro" id="IPR014729">
    <property type="entry name" value="Rossmann-like_a/b/a_fold"/>
</dbReference>
<dbReference type="NCBIfam" id="TIGR00125">
    <property type="entry name" value="cyt_tran_rel"/>
    <property type="match status" value="1"/>
</dbReference>
<dbReference type="NCBIfam" id="NF008454">
    <property type="entry name" value="PRK11316.1"/>
    <property type="match status" value="1"/>
</dbReference>
<dbReference type="NCBIfam" id="TIGR02198">
    <property type="entry name" value="rfaE_dom_I"/>
    <property type="match status" value="1"/>
</dbReference>
<dbReference type="NCBIfam" id="TIGR02199">
    <property type="entry name" value="rfaE_dom_II"/>
    <property type="match status" value="1"/>
</dbReference>
<dbReference type="PANTHER" id="PTHR46969">
    <property type="entry name" value="BIFUNCTIONAL PROTEIN HLDE"/>
    <property type="match status" value="1"/>
</dbReference>
<dbReference type="PANTHER" id="PTHR46969:SF1">
    <property type="entry name" value="BIFUNCTIONAL PROTEIN HLDE"/>
    <property type="match status" value="1"/>
</dbReference>
<dbReference type="Pfam" id="PF01467">
    <property type="entry name" value="CTP_transf_like"/>
    <property type="match status" value="1"/>
</dbReference>
<dbReference type="Pfam" id="PF00294">
    <property type="entry name" value="PfkB"/>
    <property type="match status" value="1"/>
</dbReference>
<dbReference type="SUPFAM" id="SSF52374">
    <property type="entry name" value="Nucleotidylyl transferase"/>
    <property type="match status" value="1"/>
</dbReference>
<dbReference type="SUPFAM" id="SSF53613">
    <property type="entry name" value="Ribokinase-like"/>
    <property type="match status" value="1"/>
</dbReference>
<keyword id="KW-0067">ATP-binding</keyword>
<keyword id="KW-0119">Carbohydrate metabolism</keyword>
<keyword id="KW-0418">Kinase</keyword>
<keyword id="KW-0511">Multifunctional enzyme</keyword>
<keyword id="KW-0547">Nucleotide-binding</keyword>
<keyword id="KW-0548">Nucleotidyltransferase</keyword>
<keyword id="KW-0808">Transferase</keyword>
<evidence type="ECO:0000255" key="1">
    <source>
        <dbReference type="HAMAP-Rule" id="MF_01603"/>
    </source>
</evidence>
<proteinExistence type="inferred from homology"/>
<comment type="function">
    <text evidence="1">Catalyzes the phosphorylation of D-glycero-D-manno-heptose 7-phosphate at the C-1 position to selectively form D-glycero-beta-D-manno-heptose-1,7-bisphosphate.</text>
</comment>
<comment type="function">
    <text evidence="1">Catalyzes the ADP transfer from ATP to D-glycero-beta-D-manno-heptose 1-phosphate, yielding ADP-D-glycero-beta-D-manno-heptose.</text>
</comment>
<comment type="catalytic activity">
    <reaction evidence="1">
        <text>D-glycero-beta-D-manno-heptose 7-phosphate + ATP = D-glycero-beta-D-manno-heptose 1,7-bisphosphate + ADP + H(+)</text>
        <dbReference type="Rhea" id="RHEA:27473"/>
        <dbReference type="ChEBI" id="CHEBI:15378"/>
        <dbReference type="ChEBI" id="CHEBI:30616"/>
        <dbReference type="ChEBI" id="CHEBI:60204"/>
        <dbReference type="ChEBI" id="CHEBI:60208"/>
        <dbReference type="ChEBI" id="CHEBI:456216"/>
        <dbReference type="EC" id="2.7.1.167"/>
    </reaction>
</comment>
<comment type="catalytic activity">
    <reaction evidence="1">
        <text>D-glycero-beta-D-manno-heptose 1-phosphate + ATP + H(+) = ADP-D-glycero-beta-D-manno-heptose + diphosphate</text>
        <dbReference type="Rhea" id="RHEA:27465"/>
        <dbReference type="ChEBI" id="CHEBI:15378"/>
        <dbReference type="ChEBI" id="CHEBI:30616"/>
        <dbReference type="ChEBI" id="CHEBI:33019"/>
        <dbReference type="ChEBI" id="CHEBI:59967"/>
        <dbReference type="ChEBI" id="CHEBI:61593"/>
        <dbReference type="EC" id="2.7.7.70"/>
    </reaction>
</comment>
<comment type="pathway">
    <text evidence="1">Nucleotide-sugar biosynthesis; ADP-L-glycero-beta-D-manno-heptose biosynthesis; ADP-L-glycero-beta-D-manno-heptose from D-glycero-beta-D-manno-heptose 7-phosphate: step 1/4.</text>
</comment>
<comment type="pathway">
    <text evidence="1">Nucleotide-sugar biosynthesis; ADP-L-glycero-beta-D-manno-heptose biosynthesis; ADP-L-glycero-beta-D-manno-heptose from D-glycero-beta-D-manno-heptose 7-phosphate: step 3/4.</text>
</comment>
<comment type="subunit">
    <text evidence="1">Homodimer.</text>
</comment>
<comment type="similarity">
    <text evidence="1">In the N-terminal section; belongs to the carbohydrate kinase PfkB family.</text>
</comment>
<comment type="similarity">
    <text evidence="1">In the C-terminal section; belongs to the cytidylyltransferase family.</text>
</comment>
<sequence length="476" mass="51935">MAQYSAEFKQAKVLVLGDVMLDRYWFGATNRISPEAPVPVVRVQENEERAGGAANVAMNIASLNVSVQLMGLIGQDETGSALSLLLEKQKIDCNFVALETHPTITKLRILSRHQQLLRLDFEEDFNNVDCKDLLAKLESAVKNYGALILSDYGKGTLKDVQKMIQIARKANVPVLIDPKGTDFERYRGATLLTPNMSEFEAVVGKCNTEEEIIKKGLKLISDIELTALLVTRSEKGMTLLRPNQEPYHLPTVAKEVFDVTGAGDTVISVLATALADGRSFEESCYLANVAAGIVVGKLGTSTVSTVELENAIHARPETGFGIMSEAELKDAVAQAKARGEKIVMTNGCFDILHPGHISYLENARKLGDRLIVAVNSDDSVKRLKGESRPINNLENRMAVLAGLASVDWLVPFTEDTPQRLIGEILPDLLVKGGDYKPEEIAGSKEVWANGGDVKVLNFENGCSTTNVIEKIKLLKD</sequence>
<organism>
    <name type="scientific">Haemophilus influenzae (strain 86-028NP)</name>
    <dbReference type="NCBI Taxonomy" id="281310"/>
    <lineage>
        <taxon>Bacteria</taxon>
        <taxon>Pseudomonadati</taxon>
        <taxon>Pseudomonadota</taxon>
        <taxon>Gammaproteobacteria</taxon>
        <taxon>Pasteurellales</taxon>
        <taxon>Pasteurellaceae</taxon>
        <taxon>Haemophilus</taxon>
    </lineage>
</organism>
<protein>
    <recommendedName>
        <fullName evidence="1">Bifunctional protein HldE</fullName>
    </recommendedName>
    <domain>
        <recommendedName>
            <fullName evidence="1">D-beta-D-heptose 7-phosphate kinase</fullName>
            <ecNumber evidence="1">2.7.1.167</ecNumber>
        </recommendedName>
        <alternativeName>
            <fullName evidence="1">D-beta-D-heptose 7-phosphotransferase</fullName>
        </alternativeName>
        <alternativeName>
            <fullName evidence="1">D-glycero-beta-D-manno-heptose-7-phosphate kinase</fullName>
        </alternativeName>
    </domain>
    <domain>
        <recommendedName>
            <fullName evidence="1">D-beta-D-heptose 1-phosphate adenylyltransferase</fullName>
            <ecNumber evidence="1">2.7.7.70</ecNumber>
        </recommendedName>
        <alternativeName>
            <fullName evidence="1">D-glycero-beta-D-manno-heptose 1-phosphate adenylyltransferase</fullName>
        </alternativeName>
    </domain>
</protein>